<keyword id="KW-0238">DNA-binding</keyword>
<keyword id="KW-0539">Nucleus</keyword>
<keyword id="KW-1185">Reference proteome</keyword>
<keyword id="KW-0804">Transcription</keyword>
<keyword id="KW-0805">Transcription regulation</keyword>
<evidence type="ECO:0000250" key="1">
    <source>
        <dbReference type="UniProtKB" id="P48436"/>
    </source>
</evidence>
<evidence type="ECO:0000250" key="2">
    <source>
        <dbReference type="UniProtKB" id="P57073"/>
    </source>
</evidence>
<evidence type="ECO:0000255" key="3">
    <source>
        <dbReference type="PROSITE-ProRule" id="PRU00267"/>
    </source>
</evidence>
<evidence type="ECO:0000256" key="4">
    <source>
        <dbReference type="SAM" id="MobiDB-lite"/>
    </source>
</evidence>
<evidence type="ECO:0000269" key="5">
    <source>
    </source>
</evidence>
<evidence type="ECO:0000303" key="6">
    <source>
    </source>
</evidence>
<evidence type="ECO:0000305" key="7"/>
<evidence type="ECO:0000312" key="8">
    <source>
        <dbReference type="MGI" id="MGI:98370"/>
    </source>
</evidence>
<sequence>MLDMSEARAQPPCSPSGTASSMSHVEDSDSDAPPSPAGSEGLGRAGGGGRGDTAEAADERFPACIRDAVSQVLKGYDWSLVPMPVRGGGGGTLKAKPHVKRPMNAFMVWAQAARRKLADQYPHLHNAELSKTLGKLWRLLSESEKRPFVEEAERLRVQHKKDHPDYKYQPRRRKSVKTGRSDSDSGTELGHHPGGPMYKADAVLGEAHHHSDHHTGQTHGPPTPPTTPKTDLHQASNGSKQELRLEGRRLVDSGRQNIDFSNVDISELSSEVISNMDTFDVHEFDQYLPLNGHSALPTEPSQATASGSYGGASYSHSGATGIGASPVWAHKGAPSASASPTEAGPLRPQIKTEQLSPSHYNDQSHGSPGRADYGSYSAQASVTTAASATAASSFASAQCDYTDLQASNYYSPYPGYPPSLYQYPYFHSSRRPYASPLLNGLSMPPAHSPSSNWDQPVYTTLTRP</sequence>
<feature type="chain" id="PRO_0000048734" description="Transcription factor SOX-8">
    <location>
        <begin position="1"/>
        <end position="464"/>
    </location>
</feature>
<feature type="DNA-binding region" description="HMG box" evidence="3">
    <location>
        <begin position="99"/>
        <end position="167"/>
    </location>
</feature>
<feature type="region of interest" description="Disordered" evidence="4">
    <location>
        <begin position="1"/>
        <end position="55"/>
    </location>
</feature>
<feature type="region of interest" description="Dimerization (DIM)" evidence="2">
    <location>
        <begin position="55"/>
        <end position="97"/>
    </location>
</feature>
<feature type="region of interest" description="Disordered" evidence="4">
    <location>
        <begin position="154"/>
        <end position="244"/>
    </location>
</feature>
<feature type="region of interest" description="Transactivation domain (TAM)" evidence="2">
    <location>
        <begin position="221"/>
        <end position="299"/>
    </location>
</feature>
<feature type="region of interest" description="Disordered" evidence="4">
    <location>
        <begin position="292"/>
        <end position="315"/>
    </location>
</feature>
<feature type="region of interest" description="Transactivation domain (TAC)" evidence="2">
    <location>
        <begin position="347"/>
        <end position="464"/>
    </location>
</feature>
<feature type="region of interest" description="Disordered" evidence="4">
    <location>
        <begin position="354"/>
        <end position="374"/>
    </location>
</feature>
<feature type="region of interest" description="Disordered" evidence="4">
    <location>
        <begin position="444"/>
        <end position="464"/>
    </location>
</feature>
<feature type="short sequence motif" description="9aaTAD" evidence="2">
    <location>
        <begin position="418"/>
        <end position="426"/>
    </location>
</feature>
<feature type="compositionally biased region" description="Gly residues" evidence="4">
    <location>
        <begin position="40"/>
        <end position="51"/>
    </location>
</feature>
<feature type="compositionally biased region" description="Basic and acidic residues" evidence="4">
    <location>
        <begin position="154"/>
        <end position="168"/>
    </location>
</feature>
<feature type="compositionally biased region" description="Basic and acidic residues" evidence="4">
    <location>
        <begin position="206"/>
        <end position="215"/>
    </location>
</feature>
<feature type="compositionally biased region" description="Low complexity" evidence="4">
    <location>
        <begin position="303"/>
        <end position="315"/>
    </location>
</feature>
<feature type="compositionally biased region" description="Polar residues" evidence="4">
    <location>
        <begin position="354"/>
        <end position="366"/>
    </location>
</feature>
<feature type="compositionally biased region" description="Polar residues" evidence="4">
    <location>
        <begin position="448"/>
        <end position="464"/>
    </location>
</feature>
<comment type="function">
    <text evidence="5">Transcription factor that may play a role in central nervous system, limb and facial development. May be involved in male sex determination. Binds the consensus motif 5'-[AT][AT]CAA[AT]G-3'.</text>
</comment>
<comment type="subcellular location">
    <subcellularLocation>
        <location evidence="3">Nucleus</location>
    </subcellularLocation>
</comment>
<comment type="tissue specificity">
    <text>Brain, gut, limb, and testes. Slightly in liver, ovaries, spinal cord, lung and heart.</text>
</comment>
<comment type="domain">
    <text evidence="1">The transactivation domains TAM and TAC (for transactivation domain in the middle and at the C-terminus, respectively) are required to contact transcriptional coactivators and basal transcriptional machinery components and thereby induce gene transactivation.</text>
</comment>
<comment type="domain">
    <text evidence="2">The 9aaTAD motif is a transactivation domain present in a large number of yeast and animal transcription factors.</text>
</comment>
<accession>Q04886</accession>
<proteinExistence type="evidence at transcript level"/>
<gene>
    <name evidence="6 8" type="primary">Sox8</name>
    <name type="synonym">Sox-8</name>
</gene>
<name>SOX8_MOUSE</name>
<dbReference type="EMBL" id="AF191325">
    <property type="protein sequence ID" value="AAF35837.1"/>
    <property type="molecule type" value="Genomic_DNA"/>
</dbReference>
<dbReference type="EMBL" id="BC085619">
    <property type="protein sequence ID" value="AAH85619.1"/>
    <property type="molecule type" value="mRNA"/>
</dbReference>
<dbReference type="EMBL" id="Z18957">
    <property type="protein sequence ID" value="CAA79482.1"/>
    <property type="molecule type" value="mRNA"/>
</dbReference>
<dbReference type="CCDS" id="CCDS28521.1"/>
<dbReference type="PIR" id="S30246">
    <property type="entry name" value="S30246"/>
</dbReference>
<dbReference type="RefSeq" id="NP_035577.1">
    <property type="nucleotide sequence ID" value="NM_011447.3"/>
</dbReference>
<dbReference type="SMR" id="Q04886"/>
<dbReference type="BioGRID" id="203412">
    <property type="interactions" value="15"/>
</dbReference>
<dbReference type="FunCoup" id="Q04886">
    <property type="interactions" value="357"/>
</dbReference>
<dbReference type="IntAct" id="Q04886">
    <property type="interactions" value="1"/>
</dbReference>
<dbReference type="STRING" id="10090.ENSMUSP00000025003"/>
<dbReference type="iPTMnet" id="Q04886"/>
<dbReference type="PhosphoSitePlus" id="Q04886"/>
<dbReference type="jPOST" id="Q04886"/>
<dbReference type="PaxDb" id="10090-ENSMUSP00000025003"/>
<dbReference type="ProteomicsDB" id="261119"/>
<dbReference type="Antibodypedia" id="9438">
    <property type="antibodies" value="345 antibodies from 36 providers"/>
</dbReference>
<dbReference type="DNASU" id="20681"/>
<dbReference type="Ensembl" id="ENSMUST00000025003.11">
    <property type="protein sequence ID" value="ENSMUSP00000025003.4"/>
    <property type="gene ID" value="ENSMUSG00000024176.12"/>
</dbReference>
<dbReference type="GeneID" id="20681"/>
<dbReference type="KEGG" id="mmu:20681"/>
<dbReference type="UCSC" id="uc008bay.1">
    <property type="organism name" value="mouse"/>
</dbReference>
<dbReference type="AGR" id="MGI:98370"/>
<dbReference type="CTD" id="30812"/>
<dbReference type="MGI" id="MGI:98370">
    <property type="gene designation" value="Sox8"/>
</dbReference>
<dbReference type="VEuPathDB" id="HostDB:ENSMUSG00000024176"/>
<dbReference type="eggNOG" id="KOG0527">
    <property type="taxonomic scope" value="Eukaryota"/>
</dbReference>
<dbReference type="GeneTree" id="ENSGT00940000159920"/>
<dbReference type="HOGENOM" id="CLU_031800_0_0_1"/>
<dbReference type="InParanoid" id="Q04886"/>
<dbReference type="OMA" id="AQVWTHK"/>
<dbReference type="OrthoDB" id="6247875at2759"/>
<dbReference type="PhylomeDB" id="Q04886"/>
<dbReference type="TreeFam" id="TF351735"/>
<dbReference type="BioGRID-ORCS" id="20681">
    <property type="hits" value="2 hits in 79 CRISPR screens"/>
</dbReference>
<dbReference type="ChiTaRS" id="Sox8">
    <property type="organism name" value="mouse"/>
</dbReference>
<dbReference type="PRO" id="PR:Q04886"/>
<dbReference type="Proteomes" id="UP000000589">
    <property type="component" value="Chromosome 17"/>
</dbReference>
<dbReference type="RNAct" id="Q04886">
    <property type="molecule type" value="protein"/>
</dbReference>
<dbReference type="Bgee" id="ENSMUSG00000024176">
    <property type="expression patterns" value="Expressed in epithelium of gonad and 154 other cell types or tissues"/>
</dbReference>
<dbReference type="ExpressionAtlas" id="Q04886">
    <property type="expression patterns" value="baseline and differential"/>
</dbReference>
<dbReference type="GO" id="GO:0005737">
    <property type="term" value="C:cytoplasm"/>
    <property type="evidence" value="ECO:0000314"/>
    <property type="project" value="UniProtKB"/>
</dbReference>
<dbReference type="GO" id="GO:0005634">
    <property type="term" value="C:nucleus"/>
    <property type="evidence" value="ECO:0000314"/>
    <property type="project" value="MGI"/>
</dbReference>
<dbReference type="GO" id="GO:0005667">
    <property type="term" value="C:transcription regulator complex"/>
    <property type="evidence" value="ECO:0000314"/>
    <property type="project" value="MGI"/>
</dbReference>
<dbReference type="GO" id="GO:0000987">
    <property type="term" value="F:cis-regulatory region sequence-specific DNA binding"/>
    <property type="evidence" value="ECO:0000314"/>
    <property type="project" value="MGI"/>
</dbReference>
<dbReference type="GO" id="GO:0003700">
    <property type="term" value="F:DNA-binding transcription factor activity"/>
    <property type="evidence" value="ECO:0000314"/>
    <property type="project" value="MGI"/>
</dbReference>
<dbReference type="GO" id="GO:0000981">
    <property type="term" value="F:DNA-binding transcription factor activity, RNA polymerase II-specific"/>
    <property type="evidence" value="ECO:0000314"/>
    <property type="project" value="MGI"/>
</dbReference>
<dbReference type="GO" id="GO:0140297">
    <property type="term" value="F:DNA-binding transcription factor binding"/>
    <property type="evidence" value="ECO:0000353"/>
    <property type="project" value="UniProtKB"/>
</dbReference>
<dbReference type="GO" id="GO:0000978">
    <property type="term" value="F:RNA polymerase II cis-regulatory region sequence-specific DNA binding"/>
    <property type="evidence" value="ECO:0000314"/>
    <property type="project" value="GO_Central"/>
</dbReference>
<dbReference type="GO" id="GO:0043565">
    <property type="term" value="F:sequence-specific DNA binding"/>
    <property type="evidence" value="ECO:0000314"/>
    <property type="project" value="MGI"/>
</dbReference>
<dbReference type="GO" id="GO:0060612">
    <property type="term" value="P:adipose tissue development"/>
    <property type="evidence" value="ECO:0000315"/>
    <property type="project" value="MGI"/>
</dbReference>
<dbReference type="GO" id="GO:0060018">
    <property type="term" value="P:astrocyte fate commitment"/>
    <property type="evidence" value="ECO:0000316"/>
    <property type="project" value="MGI"/>
</dbReference>
<dbReference type="GO" id="GO:0045165">
    <property type="term" value="P:cell fate commitment"/>
    <property type="evidence" value="ECO:0000316"/>
    <property type="project" value="MGI"/>
</dbReference>
<dbReference type="GO" id="GO:0048469">
    <property type="term" value="P:cell maturation"/>
    <property type="evidence" value="ECO:0000315"/>
    <property type="project" value="MGI"/>
</dbReference>
<dbReference type="GO" id="GO:0048484">
    <property type="term" value="P:enteric nervous system development"/>
    <property type="evidence" value="ECO:0000315"/>
    <property type="project" value="UniProtKB"/>
</dbReference>
<dbReference type="GO" id="GO:0045444">
    <property type="term" value="P:fat cell differentiation"/>
    <property type="evidence" value="ECO:0000315"/>
    <property type="project" value="MGI"/>
</dbReference>
<dbReference type="GO" id="GO:0001701">
    <property type="term" value="P:in utero embryonic development"/>
    <property type="evidence" value="ECO:0000316"/>
    <property type="project" value="MGI"/>
</dbReference>
<dbReference type="GO" id="GO:0008584">
    <property type="term" value="P:male gonad development"/>
    <property type="evidence" value="ECO:0000316"/>
    <property type="project" value="MGI"/>
</dbReference>
<dbReference type="GO" id="GO:0072289">
    <property type="term" value="P:metanephric nephron tubule formation"/>
    <property type="evidence" value="ECO:0000316"/>
    <property type="project" value="MGI"/>
</dbReference>
<dbReference type="GO" id="GO:0061138">
    <property type="term" value="P:morphogenesis of a branching epithelium"/>
    <property type="evidence" value="ECO:0000316"/>
    <property type="project" value="MGI"/>
</dbReference>
<dbReference type="GO" id="GO:0043066">
    <property type="term" value="P:negative regulation of apoptotic process"/>
    <property type="evidence" value="ECO:0000315"/>
    <property type="project" value="UniProtKB"/>
</dbReference>
<dbReference type="GO" id="GO:0045892">
    <property type="term" value="P:negative regulation of DNA-templated transcription"/>
    <property type="evidence" value="ECO:0000314"/>
    <property type="project" value="MGI"/>
</dbReference>
<dbReference type="GO" id="GO:0045662">
    <property type="term" value="P:negative regulation of myoblast differentiation"/>
    <property type="evidence" value="ECO:0000314"/>
    <property type="project" value="MGI"/>
</dbReference>
<dbReference type="GO" id="GO:0046533">
    <property type="term" value="P:negative regulation of photoreceptor cell differentiation"/>
    <property type="evidence" value="ECO:0000316"/>
    <property type="project" value="MGI"/>
</dbReference>
<dbReference type="GO" id="GO:0001755">
    <property type="term" value="P:neural crest cell migration"/>
    <property type="evidence" value="ECO:0000315"/>
    <property type="project" value="UniProtKB"/>
</dbReference>
<dbReference type="GO" id="GO:0048709">
    <property type="term" value="P:oligodendrocyte differentiation"/>
    <property type="evidence" value="ECO:0000315"/>
    <property type="project" value="MGI"/>
</dbReference>
<dbReference type="GO" id="GO:0001649">
    <property type="term" value="P:osteoblast differentiation"/>
    <property type="evidence" value="ECO:0000315"/>
    <property type="project" value="MGI"/>
</dbReference>
<dbReference type="GO" id="GO:0007422">
    <property type="term" value="P:peripheral nervous system development"/>
    <property type="evidence" value="ECO:0000316"/>
    <property type="project" value="MGI"/>
</dbReference>
<dbReference type="GO" id="GO:0090190">
    <property type="term" value="P:positive regulation of branching involved in ureteric bud morphogenesis"/>
    <property type="evidence" value="ECO:0000315"/>
    <property type="project" value="UniProtKB"/>
</dbReference>
<dbReference type="GO" id="GO:0045893">
    <property type="term" value="P:positive regulation of DNA-templated transcription"/>
    <property type="evidence" value="ECO:0000314"/>
    <property type="project" value="UniProtKB"/>
</dbReference>
<dbReference type="GO" id="GO:0010628">
    <property type="term" value="P:positive regulation of gene expression"/>
    <property type="evidence" value="ECO:0000316"/>
    <property type="project" value="MGI"/>
</dbReference>
<dbReference type="GO" id="GO:0014015">
    <property type="term" value="P:positive regulation of gliogenesis"/>
    <property type="evidence" value="ECO:0000315"/>
    <property type="project" value="UniProtKB"/>
</dbReference>
<dbReference type="GO" id="GO:0090184">
    <property type="term" value="P:positive regulation of kidney development"/>
    <property type="evidence" value="ECO:0000316"/>
    <property type="project" value="UniProtKB"/>
</dbReference>
<dbReference type="GO" id="GO:0033690">
    <property type="term" value="P:positive regulation of osteoblast proliferation"/>
    <property type="evidence" value="ECO:0000315"/>
    <property type="project" value="MGI"/>
</dbReference>
<dbReference type="GO" id="GO:0045944">
    <property type="term" value="P:positive regulation of transcription by RNA polymerase II"/>
    <property type="evidence" value="ECO:0000314"/>
    <property type="project" value="MGI"/>
</dbReference>
<dbReference type="GO" id="GO:0010817">
    <property type="term" value="P:regulation of hormone levels"/>
    <property type="evidence" value="ECO:0000315"/>
    <property type="project" value="MGI"/>
</dbReference>
<dbReference type="GO" id="GO:0072034">
    <property type="term" value="P:renal vesicle induction"/>
    <property type="evidence" value="ECO:0000315"/>
    <property type="project" value="UniProtKB"/>
</dbReference>
<dbReference type="GO" id="GO:0060041">
    <property type="term" value="P:retina development in camera-type eye"/>
    <property type="evidence" value="ECO:0000316"/>
    <property type="project" value="MGI"/>
</dbReference>
<dbReference type="GO" id="GO:0060221">
    <property type="term" value="P:retinal rod cell differentiation"/>
    <property type="evidence" value="ECO:0000316"/>
    <property type="project" value="MGI"/>
</dbReference>
<dbReference type="GO" id="GO:0060009">
    <property type="term" value="P:Sertoli cell development"/>
    <property type="evidence" value="ECO:0000316"/>
    <property type="project" value="MGI"/>
</dbReference>
<dbReference type="GO" id="GO:0007165">
    <property type="term" value="P:signal transduction"/>
    <property type="evidence" value="ECO:0000315"/>
    <property type="project" value="UniProtKB"/>
</dbReference>
<dbReference type="GO" id="GO:0035914">
    <property type="term" value="P:skeletal muscle cell differentiation"/>
    <property type="evidence" value="ECO:0000315"/>
    <property type="project" value="MGI"/>
</dbReference>
<dbReference type="GO" id="GO:0007283">
    <property type="term" value="P:spermatogenesis"/>
    <property type="evidence" value="ECO:0000315"/>
    <property type="project" value="MGI"/>
</dbReference>
<dbReference type="GO" id="GO:0072197">
    <property type="term" value="P:ureter morphogenesis"/>
    <property type="evidence" value="ECO:0000316"/>
    <property type="project" value="MGI"/>
</dbReference>
<dbReference type="CDD" id="cd22031">
    <property type="entry name" value="HMG-box_SoxE"/>
    <property type="match status" value="1"/>
</dbReference>
<dbReference type="FunFam" id="1.10.30.10:FF:000004">
    <property type="entry name" value="Transcription factor SOX-10"/>
    <property type="match status" value="1"/>
</dbReference>
<dbReference type="Gene3D" id="1.10.30.10">
    <property type="entry name" value="High mobility group box domain"/>
    <property type="match status" value="1"/>
</dbReference>
<dbReference type="InterPro" id="IPR009071">
    <property type="entry name" value="HMG_box_dom"/>
</dbReference>
<dbReference type="InterPro" id="IPR036910">
    <property type="entry name" value="HMG_box_dom_sf"/>
</dbReference>
<dbReference type="InterPro" id="IPR022151">
    <property type="entry name" value="Sox_N"/>
</dbReference>
<dbReference type="InterPro" id="IPR050917">
    <property type="entry name" value="SOX_TF"/>
</dbReference>
<dbReference type="PANTHER" id="PTHR45803">
    <property type="entry name" value="SOX100B"/>
    <property type="match status" value="1"/>
</dbReference>
<dbReference type="PANTHER" id="PTHR45803:SF2">
    <property type="entry name" value="TRANSCRIPTION FACTOR SOX-8"/>
    <property type="match status" value="1"/>
</dbReference>
<dbReference type="Pfam" id="PF00505">
    <property type="entry name" value="HMG_box"/>
    <property type="match status" value="1"/>
</dbReference>
<dbReference type="Pfam" id="PF12444">
    <property type="entry name" value="Sox_N"/>
    <property type="match status" value="1"/>
</dbReference>
<dbReference type="SMART" id="SM00398">
    <property type="entry name" value="HMG"/>
    <property type="match status" value="1"/>
</dbReference>
<dbReference type="SUPFAM" id="SSF47095">
    <property type="entry name" value="HMG-box"/>
    <property type="match status" value="1"/>
</dbReference>
<dbReference type="PROSITE" id="PS50118">
    <property type="entry name" value="HMG_BOX_2"/>
    <property type="match status" value="1"/>
</dbReference>
<protein>
    <recommendedName>
        <fullName evidence="7">Transcription factor SOX-8</fullName>
    </recommendedName>
</protein>
<organism>
    <name type="scientific">Mus musculus</name>
    <name type="common">Mouse</name>
    <dbReference type="NCBI Taxonomy" id="10090"/>
    <lineage>
        <taxon>Eukaryota</taxon>
        <taxon>Metazoa</taxon>
        <taxon>Chordata</taxon>
        <taxon>Craniata</taxon>
        <taxon>Vertebrata</taxon>
        <taxon>Euteleostomi</taxon>
        <taxon>Mammalia</taxon>
        <taxon>Eutheria</taxon>
        <taxon>Euarchontoglires</taxon>
        <taxon>Glires</taxon>
        <taxon>Rodentia</taxon>
        <taxon>Myomorpha</taxon>
        <taxon>Muroidea</taxon>
        <taxon>Muridae</taxon>
        <taxon>Murinae</taxon>
        <taxon>Mus</taxon>
        <taxon>Mus</taxon>
    </lineage>
</organism>
<reference key="1">
    <citation type="journal article" date="2000" name="Nucleic Acids Res.">
        <title>Cloning and characterisation of the Sry-related transcription factor gene Sox8.</title>
        <authorList>
            <person name="Schepers G.E."/>
            <person name="Bullejos M."/>
            <person name="Hosking B.M."/>
            <person name="Koopman P."/>
        </authorList>
    </citation>
    <scope>NUCLEOTIDE SEQUENCE [GENOMIC DNA]</scope>
    <scope>FUNCTION</scope>
    <source>
        <strain>129/Sv</strain>
    </source>
</reference>
<reference key="2">
    <citation type="journal article" date="2004" name="Genome Res.">
        <title>The status, quality, and expansion of the NIH full-length cDNA project: the Mammalian Gene Collection (MGC).</title>
        <authorList>
            <consortium name="The MGC Project Team"/>
        </authorList>
    </citation>
    <scope>NUCLEOTIDE SEQUENCE [LARGE SCALE MRNA]</scope>
    <source>
        <tissue>Olfactory epithelium</tissue>
    </source>
</reference>
<reference key="3">
    <citation type="journal article" date="1993" name="Nucleic Acids Res.">
        <title>Seven new members of the Sox gene family expressed during mouse development.</title>
        <authorList>
            <person name="Wright E.M."/>
            <person name="Snopek B."/>
            <person name="Koopman P."/>
        </authorList>
    </citation>
    <scope>NUCLEOTIDE SEQUENCE [MRNA] OF 107-162</scope>
</reference>